<protein>
    <recommendedName>
        <fullName evidence="1">Small ribosomal subunit protein uS7</fullName>
    </recommendedName>
    <alternativeName>
        <fullName evidence="2">30S ribosomal protein S7</fullName>
    </alternativeName>
</protein>
<gene>
    <name evidence="1" type="primary">rpsG</name>
    <name type="ordered locus">DNO_1279</name>
</gene>
<feature type="chain" id="PRO_1000014186" description="Small ribosomal subunit protein uS7">
    <location>
        <begin position="1"/>
        <end position="156"/>
    </location>
</feature>
<reference key="1">
    <citation type="journal article" date="2007" name="Nat. Biotechnol.">
        <title>Genome sequence and identification of candidate vaccine antigens from the animal pathogen Dichelobacter nodosus.</title>
        <authorList>
            <person name="Myers G.S.A."/>
            <person name="Parker D."/>
            <person name="Al-Hasani K."/>
            <person name="Kennan R.M."/>
            <person name="Seemann T."/>
            <person name="Ren Q."/>
            <person name="Badger J.H."/>
            <person name="Selengut J.D."/>
            <person name="Deboy R.T."/>
            <person name="Tettelin H."/>
            <person name="Boyce J.D."/>
            <person name="McCarl V.P."/>
            <person name="Han X."/>
            <person name="Nelson W.C."/>
            <person name="Madupu R."/>
            <person name="Mohamoud Y."/>
            <person name="Holley T."/>
            <person name="Fedorova N."/>
            <person name="Khouri H."/>
            <person name="Bottomley S.P."/>
            <person name="Whittington R.J."/>
            <person name="Adler B."/>
            <person name="Songer J.G."/>
            <person name="Rood J.I."/>
            <person name="Paulsen I.T."/>
        </authorList>
    </citation>
    <scope>NUCLEOTIDE SEQUENCE [LARGE SCALE GENOMIC DNA]</scope>
    <source>
        <strain>VCS1703A</strain>
    </source>
</reference>
<name>RS7_DICNV</name>
<proteinExistence type="inferred from homology"/>
<keyword id="KW-1185">Reference proteome</keyword>
<keyword id="KW-0687">Ribonucleoprotein</keyword>
<keyword id="KW-0689">Ribosomal protein</keyword>
<keyword id="KW-0694">RNA-binding</keyword>
<keyword id="KW-0699">rRNA-binding</keyword>
<keyword id="KW-0820">tRNA-binding</keyword>
<dbReference type="EMBL" id="CP000513">
    <property type="protein sequence ID" value="ABQ13114.1"/>
    <property type="molecule type" value="Genomic_DNA"/>
</dbReference>
<dbReference type="RefSeq" id="WP_012031574.1">
    <property type="nucleotide sequence ID" value="NC_009446.1"/>
</dbReference>
<dbReference type="SMR" id="A5EX67"/>
<dbReference type="STRING" id="246195.DNO_1279"/>
<dbReference type="KEGG" id="dno:DNO_1279"/>
<dbReference type="eggNOG" id="COG0049">
    <property type="taxonomic scope" value="Bacteria"/>
</dbReference>
<dbReference type="HOGENOM" id="CLU_072226_1_1_6"/>
<dbReference type="OrthoDB" id="9807653at2"/>
<dbReference type="Proteomes" id="UP000000248">
    <property type="component" value="Chromosome"/>
</dbReference>
<dbReference type="GO" id="GO:0015935">
    <property type="term" value="C:small ribosomal subunit"/>
    <property type="evidence" value="ECO:0007669"/>
    <property type="project" value="InterPro"/>
</dbReference>
<dbReference type="GO" id="GO:0019843">
    <property type="term" value="F:rRNA binding"/>
    <property type="evidence" value="ECO:0007669"/>
    <property type="project" value="UniProtKB-UniRule"/>
</dbReference>
<dbReference type="GO" id="GO:0003735">
    <property type="term" value="F:structural constituent of ribosome"/>
    <property type="evidence" value="ECO:0007669"/>
    <property type="project" value="InterPro"/>
</dbReference>
<dbReference type="GO" id="GO:0000049">
    <property type="term" value="F:tRNA binding"/>
    <property type="evidence" value="ECO:0007669"/>
    <property type="project" value="UniProtKB-UniRule"/>
</dbReference>
<dbReference type="GO" id="GO:0006412">
    <property type="term" value="P:translation"/>
    <property type="evidence" value="ECO:0007669"/>
    <property type="project" value="UniProtKB-UniRule"/>
</dbReference>
<dbReference type="CDD" id="cd14869">
    <property type="entry name" value="uS7_Bacteria"/>
    <property type="match status" value="1"/>
</dbReference>
<dbReference type="FunFam" id="1.10.455.10:FF:000001">
    <property type="entry name" value="30S ribosomal protein S7"/>
    <property type="match status" value="1"/>
</dbReference>
<dbReference type="Gene3D" id="1.10.455.10">
    <property type="entry name" value="Ribosomal protein S7 domain"/>
    <property type="match status" value="1"/>
</dbReference>
<dbReference type="HAMAP" id="MF_00480_B">
    <property type="entry name" value="Ribosomal_uS7_B"/>
    <property type="match status" value="1"/>
</dbReference>
<dbReference type="InterPro" id="IPR000235">
    <property type="entry name" value="Ribosomal_uS7"/>
</dbReference>
<dbReference type="InterPro" id="IPR005717">
    <property type="entry name" value="Ribosomal_uS7_bac/org-type"/>
</dbReference>
<dbReference type="InterPro" id="IPR020606">
    <property type="entry name" value="Ribosomal_uS7_CS"/>
</dbReference>
<dbReference type="InterPro" id="IPR023798">
    <property type="entry name" value="Ribosomal_uS7_dom"/>
</dbReference>
<dbReference type="InterPro" id="IPR036823">
    <property type="entry name" value="Ribosomal_uS7_dom_sf"/>
</dbReference>
<dbReference type="NCBIfam" id="TIGR01029">
    <property type="entry name" value="rpsG_bact"/>
    <property type="match status" value="1"/>
</dbReference>
<dbReference type="PANTHER" id="PTHR11205">
    <property type="entry name" value="RIBOSOMAL PROTEIN S7"/>
    <property type="match status" value="1"/>
</dbReference>
<dbReference type="Pfam" id="PF00177">
    <property type="entry name" value="Ribosomal_S7"/>
    <property type="match status" value="1"/>
</dbReference>
<dbReference type="PIRSF" id="PIRSF002122">
    <property type="entry name" value="RPS7p_RPS7a_RPS5e_RPS7o"/>
    <property type="match status" value="1"/>
</dbReference>
<dbReference type="SUPFAM" id="SSF47973">
    <property type="entry name" value="Ribosomal protein S7"/>
    <property type="match status" value="1"/>
</dbReference>
<dbReference type="PROSITE" id="PS00052">
    <property type="entry name" value="RIBOSOMAL_S7"/>
    <property type="match status" value="1"/>
</dbReference>
<sequence length="156" mass="17783">MSRRVRAPIRHILPDPKFGNVMVAKFVNMLMVDGKKSVAEKVVYQALETAGKKKNMEAISLLEEALDKVRPAVEVKSRRVGGATYQVPVEVRPVRQNALAMRWLIEAARNRNEKSMAERLANEFLEAVEERGAAVKKRDETHRMAEANKAFAHFRW</sequence>
<evidence type="ECO:0000255" key="1">
    <source>
        <dbReference type="HAMAP-Rule" id="MF_00480"/>
    </source>
</evidence>
<evidence type="ECO:0000305" key="2"/>
<comment type="function">
    <text evidence="1">One of the primary rRNA binding proteins, it binds directly to 16S rRNA where it nucleates assembly of the head domain of the 30S subunit. Is located at the subunit interface close to the decoding center, probably blocks exit of the E-site tRNA.</text>
</comment>
<comment type="subunit">
    <text evidence="1">Part of the 30S ribosomal subunit. Contacts proteins S9 and S11.</text>
</comment>
<comment type="similarity">
    <text evidence="1">Belongs to the universal ribosomal protein uS7 family.</text>
</comment>
<accession>A5EX67</accession>
<organism>
    <name type="scientific">Dichelobacter nodosus (strain VCS1703A)</name>
    <dbReference type="NCBI Taxonomy" id="246195"/>
    <lineage>
        <taxon>Bacteria</taxon>
        <taxon>Pseudomonadati</taxon>
        <taxon>Pseudomonadota</taxon>
        <taxon>Gammaproteobacteria</taxon>
        <taxon>Cardiobacteriales</taxon>
        <taxon>Cardiobacteriaceae</taxon>
        <taxon>Dichelobacter</taxon>
    </lineage>
</organism>